<keyword id="KW-0378">Hydrolase</keyword>
<reference key="1">
    <citation type="journal article" date="2007" name="Science">
        <title>The Calyptogena magnifica chemoautotrophic symbiont genome.</title>
        <authorList>
            <person name="Newton I.L.G."/>
            <person name="Woyke T."/>
            <person name="Auchtung T.A."/>
            <person name="Dilly G.F."/>
            <person name="Dutton R.J."/>
            <person name="Fisher M.C."/>
            <person name="Fontanez K.M."/>
            <person name="Lau E."/>
            <person name="Stewart F.J."/>
            <person name="Richardson P.M."/>
            <person name="Barry K.W."/>
            <person name="Saunders E."/>
            <person name="Detter J.C."/>
            <person name="Wu D."/>
            <person name="Eisen J.A."/>
            <person name="Cavanaugh C.M."/>
        </authorList>
    </citation>
    <scope>NUCLEOTIDE SEQUENCE [LARGE SCALE GENOMIC DNA]</scope>
</reference>
<organism>
    <name type="scientific">Ruthia magnifica subsp. Calyptogena magnifica</name>
    <dbReference type="NCBI Taxonomy" id="413404"/>
    <lineage>
        <taxon>Bacteria</taxon>
        <taxon>Pseudomonadati</taxon>
        <taxon>Pseudomonadota</taxon>
        <taxon>Gammaproteobacteria</taxon>
        <taxon>Candidatus Pseudothioglobaceae</taxon>
        <taxon>Candidatus Ruthturnera</taxon>
    </lineage>
</organism>
<proteinExistence type="inferred from homology"/>
<evidence type="ECO:0000255" key="1">
    <source>
        <dbReference type="HAMAP-Rule" id="MF_00298"/>
    </source>
</evidence>
<accession>A1AX38</accession>
<name>RPPH_RUTMC</name>
<comment type="function">
    <text evidence="1">Accelerates the degradation of transcripts by removing pyrophosphate from the 5'-end of triphosphorylated RNA, leading to a more labile monophosphorylated state that can stimulate subsequent ribonuclease cleavage.</text>
</comment>
<comment type="cofactor">
    <cofactor evidence="1">
        <name>a divalent metal cation</name>
        <dbReference type="ChEBI" id="CHEBI:60240"/>
    </cofactor>
</comment>
<comment type="similarity">
    <text evidence="1">Belongs to the Nudix hydrolase family. RppH subfamily.</text>
</comment>
<gene>
    <name evidence="1" type="primary">rppH</name>
    <name evidence="1" type="synonym">nudH</name>
    <name type="ordered locus">Rmag_0768</name>
</gene>
<dbReference type="EC" id="3.6.1.-" evidence="1"/>
<dbReference type="EMBL" id="CP000488">
    <property type="protein sequence ID" value="ABL02495.1"/>
    <property type="molecule type" value="Genomic_DNA"/>
</dbReference>
<dbReference type="RefSeq" id="WP_011738120.1">
    <property type="nucleotide sequence ID" value="NC_008610.1"/>
</dbReference>
<dbReference type="SMR" id="A1AX38"/>
<dbReference type="STRING" id="413404.Rmag_0768"/>
<dbReference type="KEGG" id="rma:Rmag_0768"/>
<dbReference type="eggNOG" id="COG0494">
    <property type="taxonomic scope" value="Bacteria"/>
</dbReference>
<dbReference type="HOGENOM" id="CLU_087195_3_2_6"/>
<dbReference type="OrthoDB" id="9816040at2"/>
<dbReference type="Proteomes" id="UP000002587">
    <property type="component" value="Chromosome"/>
</dbReference>
<dbReference type="GO" id="GO:0005737">
    <property type="term" value="C:cytoplasm"/>
    <property type="evidence" value="ECO:0007669"/>
    <property type="project" value="TreeGrafter"/>
</dbReference>
<dbReference type="GO" id="GO:0034353">
    <property type="term" value="F:mRNA 5'-diphosphatase activity"/>
    <property type="evidence" value="ECO:0007669"/>
    <property type="project" value="TreeGrafter"/>
</dbReference>
<dbReference type="GO" id="GO:0006402">
    <property type="term" value="P:mRNA catabolic process"/>
    <property type="evidence" value="ECO:0007669"/>
    <property type="project" value="TreeGrafter"/>
</dbReference>
<dbReference type="CDD" id="cd03671">
    <property type="entry name" value="NUDIX_Ap4A_hydrolase_plant_like"/>
    <property type="match status" value="1"/>
</dbReference>
<dbReference type="Gene3D" id="3.90.79.10">
    <property type="entry name" value="Nucleoside Triphosphate Pyrophosphohydrolase"/>
    <property type="match status" value="1"/>
</dbReference>
<dbReference type="HAMAP" id="MF_00298">
    <property type="entry name" value="Nudix_RppH"/>
    <property type="match status" value="1"/>
</dbReference>
<dbReference type="InterPro" id="IPR015797">
    <property type="entry name" value="NUDIX_hydrolase-like_dom_sf"/>
</dbReference>
<dbReference type="InterPro" id="IPR020084">
    <property type="entry name" value="NUDIX_hydrolase_CS"/>
</dbReference>
<dbReference type="InterPro" id="IPR000086">
    <property type="entry name" value="NUDIX_hydrolase_dom"/>
</dbReference>
<dbReference type="InterPro" id="IPR022927">
    <property type="entry name" value="RppH"/>
</dbReference>
<dbReference type="NCBIfam" id="NF001936">
    <property type="entry name" value="PRK00714.1-3"/>
    <property type="match status" value="1"/>
</dbReference>
<dbReference type="NCBIfam" id="NF001937">
    <property type="entry name" value="PRK00714.1-4"/>
    <property type="match status" value="1"/>
</dbReference>
<dbReference type="NCBIfam" id="NF001938">
    <property type="entry name" value="PRK00714.1-5"/>
    <property type="match status" value="1"/>
</dbReference>
<dbReference type="PANTHER" id="PTHR23114">
    <property type="entry name" value="M7GPPPN-MRNA HYDROLASE"/>
    <property type="match status" value="1"/>
</dbReference>
<dbReference type="PANTHER" id="PTHR23114:SF17">
    <property type="entry name" value="M7GPPPN-MRNA HYDROLASE"/>
    <property type="match status" value="1"/>
</dbReference>
<dbReference type="Pfam" id="PF00293">
    <property type="entry name" value="NUDIX"/>
    <property type="match status" value="1"/>
</dbReference>
<dbReference type="SUPFAM" id="SSF55811">
    <property type="entry name" value="Nudix"/>
    <property type="match status" value="1"/>
</dbReference>
<dbReference type="PROSITE" id="PS51462">
    <property type="entry name" value="NUDIX"/>
    <property type="match status" value="1"/>
</dbReference>
<dbReference type="PROSITE" id="PS00893">
    <property type="entry name" value="NUDIX_BOX"/>
    <property type="match status" value="1"/>
</dbReference>
<protein>
    <recommendedName>
        <fullName evidence="1">RNA pyrophosphohydrolase</fullName>
        <ecNumber evidence="1">3.6.1.-</ecNumber>
    </recommendedName>
    <alternativeName>
        <fullName evidence="1">(Di)nucleoside polyphosphate hydrolase</fullName>
    </alternativeName>
</protein>
<sequence length="179" mass="21137">MIDSEGYRANVGIVITNDKQQVLLAKRLKQDSWQLPQGGIDFGESELDALFRELNEEIGLSFEHISILAKTPKWLRYDFPDYHIKHKQKPVCIGQKQVWFLLRLISNENNIKLNMHTQVEFDDWAWVDYWRPIEDVIDFKKPIYEDMLKALAPVLFNNQHKIPNQYLRPLKCSAIILDK</sequence>
<feature type="chain" id="PRO_1000021991" description="RNA pyrophosphohydrolase">
    <location>
        <begin position="1"/>
        <end position="179"/>
    </location>
</feature>
<feature type="domain" description="Nudix hydrolase" evidence="1">
    <location>
        <begin position="6"/>
        <end position="149"/>
    </location>
</feature>
<feature type="short sequence motif" description="Nudix box">
    <location>
        <begin position="38"/>
        <end position="59"/>
    </location>
</feature>